<gene>
    <name evidence="1" type="primary">metE</name>
    <name type="ordered locus">PSEEN4639</name>
</gene>
<proteinExistence type="inferred from homology"/>
<name>METE_PSEE4</name>
<sequence length="762" mass="85700">MALAHNLGFPRIGRDRELKKAQEAYWKGELDEAGLCAVGRGLRAAHWQAQKAAGIELLPVGDFAWYDQVLTHSLTFGVIPERFRAKDGAKPTLQTLFAMARGVSDSCCGGAHAQEMTKWFDTNYHYLVPEFTADQQFALSWEQLFEEVEEAKALGHAVKPVVIGPLTYLWLGKTKGADFDKLELLDRLLPLYDQILNRLAVQGVEWVQIDEPILALDLPQDWKNAYERVYNILQRAPLKKLIATYFGGLEDNLGLAANLPVDGLHIDLVRAPDQYPTILDRLPAYKVLSLGVVNGRNVWRCDLEKALEVLRHAHERLGDRLWVAPSCSLLHSPVDLAREDKLDDELKSWLAFAVQKCQEVALLAKAINQPEAADVVTVLAQSRAVQHRRATSPRIHKPAVQARVAAIKPADSQRATAFEQRIAKQRAGLDLPAFPTTTIGSFPQTSAIRLARQSFKQGKLTEADYVEAMHSEIRHAVEIQENLGLDVLVHGEAERNDMVEYFAEQLDGYVFTRFGWVQSYGSRCVKPAVIFGDLSRPKAMTVEWIKYAQGLTRKAMKGMLTGPVTMLMWSFPREDVTREVQARQLALAIRDEVVDLEAAGIKIVQIDEAAFREGLPLRRSAWPHYLEWATEAFRLCASDVRDETQIHTHMCYSEFNDVIESIAAMDADVITIETSRSDMELLEAFERFDYPNEIGPGVYDIHSPRVPTKEEMVKLLRKAAQRIPAERLWVNPDCGLKTRAWPETEAALVNMVAAARELRATA</sequence>
<keyword id="KW-0028">Amino-acid biosynthesis</keyword>
<keyword id="KW-0479">Metal-binding</keyword>
<keyword id="KW-0486">Methionine biosynthesis</keyword>
<keyword id="KW-0489">Methyltransferase</keyword>
<keyword id="KW-0677">Repeat</keyword>
<keyword id="KW-0808">Transferase</keyword>
<keyword id="KW-0862">Zinc</keyword>
<organism>
    <name type="scientific">Pseudomonas entomophila (strain L48)</name>
    <dbReference type="NCBI Taxonomy" id="384676"/>
    <lineage>
        <taxon>Bacteria</taxon>
        <taxon>Pseudomonadati</taxon>
        <taxon>Pseudomonadota</taxon>
        <taxon>Gammaproteobacteria</taxon>
        <taxon>Pseudomonadales</taxon>
        <taxon>Pseudomonadaceae</taxon>
        <taxon>Pseudomonas</taxon>
    </lineage>
</organism>
<comment type="function">
    <text evidence="1">Catalyzes the transfer of a methyl group from 5-methyltetrahydrofolate to homocysteine resulting in methionine formation.</text>
</comment>
<comment type="catalytic activity">
    <reaction evidence="1">
        <text>5-methyltetrahydropteroyltri-L-glutamate + L-homocysteine = tetrahydropteroyltri-L-glutamate + L-methionine</text>
        <dbReference type="Rhea" id="RHEA:21196"/>
        <dbReference type="ChEBI" id="CHEBI:57844"/>
        <dbReference type="ChEBI" id="CHEBI:58140"/>
        <dbReference type="ChEBI" id="CHEBI:58199"/>
        <dbReference type="ChEBI" id="CHEBI:58207"/>
        <dbReference type="EC" id="2.1.1.14"/>
    </reaction>
</comment>
<comment type="cofactor">
    <cofactor evidence="1">
        <name>Zn(2+)</name>
        <dbReference type="ChEBI" id="CHEBI:29105"/>
    </cofactor>
    <text evidence="1">Binds 1 zinc ion per subunit.</text>
</comment>
<comment type="pathway">
    <text evidence="1">Amino-acid biosynthesis; L-methionine biosynthesis via de novo pathway; L-methionine from L-homocysteine (MetE route): step 1/1.</text>
</comment>
<comment type="similarity">
    <text evidence="1">Belongs to the vitamin-B12 independent methionine synthase family.</text>
</comment>
<evidence type="ECO:0000255" key="1">
    <source>
        <dbReference type="HAMAP-Rule" id="MF_00172"/>
    </source>
</evidence>
<accession>Q1I4X3</accession>
<protein>
    <recommendedName>
        <fullName evidence="1">5-methyltetrahydropteroyltriglutamate--homocysteine methyltransferase</fullName>
        <ecNumber evidence="1">2.1.1.14</ecNumber>
    </recommendedName>
    <alternativeName>
        <fullName evidence="1">Cobalamin-independent methionine synthase</fullName>
    </alternativeName>
    <alternativeName>
        <fullName evidence="1">Methionine synthase, vitamin-B12 independent isozyme</fullName>
    </alternativeName>
</protein>
<dbReference type="EC" id="2.1.1.14" evidence="1"/>
<dbReference type="EMBL" id="CT573326">
    <property type="protein sequence ID" value="CAK17313.1"/>
    <property type="molecule type" value="Genomic_DNA"/>
</dbReference>
<dbReference type="RefSeq" id="WP_011535678.1">
    <property type="nucleotide sequence ID" value="NC_008027.1"/>
</dbReference>
<dbReference type="SMR" id="Q1I4X3"/>
<dbReference type="STRING" id="384676.PSEEN4639"/>
<dbReference type="GeneID" id="32807617"/>
<dbReference type="KEGG" id="pen:PSEEN4639"/>
<dbReference type="eggNOG" id="COG0620">
    <property type="taxonomic scope" value="Bacteria"/>
</dbReference>
<dbReference type="HOGENOM" id="CLU_013175_0_0_6"/>
<dbReference type="OrthoDB" id="244285at2"/>
<dbReference type="UniPathway" id="UPA00051">
    <property type="reaction ID" value="UER00082"/>
</dbReference>
<dbReference type="Proteomes" id="UP000000658">
    <property type="component" value="Chromosome"/>
</dbReference>
<dbReference type="GO" id="GO:0003871">
    <property type="term" value="F:5-methyltetrahydropteroyltriglutamate-homocysteine S-methyltransferase activity"/>
    <property type="evidence" value="ECO:0007669"/>
    <property type="project" value="UniProtKB-UniRule"/>
</dbReference>
<dbReference type="GO" id="GO:0008270">
    <property type="term" value="F:zinc ion binding"/>
    <property type="evidence" value="ECO:0007669"/>
    <property type="project" value="InterPro"/>
</dbReference>
<dbReference type="GO" id="GO:0009086">
    <property type="term" value="P:methionine biosynthetic process"/>
    <property type="evidence" value="ECO:0007669"/>
    <property type="project" value="UniProtKB-UniRule"/>
</dbReference>
<dbReference type="GO" id="GO:0032259">
    <property type="term" value="P:methylation"/>
    <property type="evidence" value="ECO:0007669"/>
    <property type="project" value="UniProtKB-KW"/>
</dbReference>
<dbReference type="CDD" id="cd03311">
    <property type="entry name" value="CIMS_C_terminal_like"/>
    <property type="match status" value="1"/>
</dbReference>
<dbReference type="CDD" id="cd03312">
    <property type="entry name" value="CIMS_N_terminal_like"/>
    <property type="match status" value="1"/>
</dbReference>
<dbReference type="FunFam" id="3.20.20.210:FF:000002">
    <property type="entry name" value="5-methyltetrahydropteroyltriglutamate--homocysteine methyltransferase"/>
    <property type="match status" value="1"/>
</dbReference>
<dbReference type="FunFam" id="3.20.20.210:FF:000003">
    <property type="entry name" value="5-methyltetrahydropteroyltriglutamate--homocysteine methyltransferase"/>
    <property type="match status" value="1"/>
</dbReference>
<dbReference type="Gene3D" id="3.20.20.210">
    <property type="match status" value="2"/>
</dbReference>
<dbReference type="HAMAP" id="MF_00172">
    <property type="entry name" value="Meth_synth"/>
    <property type="match status" value="1"/>
</dbReference>
<dbReference type="InterPro" id="IPR013215">
    <property type="entry name" value="Cbl-indep_Met_Synth_N"/>
</dbReference>
<dbReference type="InterPro" id="IPR006276">
    <property type="entry name" value="Cobalamin-indep_Met_synthase"/>
</dbReference>
<dbReference type="InterPro" id="IPR002629">
    <property type="entry name" value="Met_Synth_C/arc"/>
</dbReference>
<dbReference type="InterPro" id="IPR038071">
    <property type="entry name" value="UROD/MetE-like_sf"/>
</dbReference>
<dbReference type="NCBIfam" id="TIGR01371">
    <property type="entry name" value="met_syn_B12ind"/>
    <property type="match status" value="1"/>
</dbReference>
<dbReference type="NCBIfam" id="NF003556">
    <property type="entry name" value="PRK05222.1"/>
    <property type="match status" value="1"/>
</dbReference>
<dbReference type="PANTHER" id="PTHR30519">
    <property type="entry name" value="5-METHYLTETRAHYDROPTEROYLTRIGLUTAMATE--HOMOCYSTEINE METHYLTRANSFERASE"/>
    <property type="match status" value="1"/>
</dbReference>
<dbReference type="Pfam" id="PF08267">
    <property type="entry name" value="Meth_synt_1"/>
    <property type="match status" value="1"/>
</dbReference>
<dbReference type="Pfam" id="PF01717">
    <property type="entry name" value="Meth_synt_2"/>
    <property type="match status" value="1"/>
</dbReference>
<dbReference type="PIRSF" id="PIRSF000382">
    <property type="entry name" value="MeTrfase_B12_ind"/>
    <property type="match status" value="1"/>
</dbReference>
<dbReference type="SUPFAM" id="SSF51726">
    <property type="entry name" value="UROD/MetE-like"/>
    <property type="match status" value="2"/>
</dbReference>
<reference key="1">
    <citation type="journal article" date="2006" name="Nat. Biotechnol.">
        <title>Complete genome sequence of the entomopathogenic and metabolically versatile soil bacterium Pseudomonas entomophila.</title>
        <authorList>
            <person name="Vodovar N."/>
            <person name="Vallenet D."/>
            <person name="Cruveiller S."/>
            <person name="Rouy Z."/>
            <person name="Barbe V."/>
            <person name="Acosta C."/>
            <person name="Cattolico L."/>
            <person name="Jubin C."/>
            <person name="Lajus A."/>
            <person name="Segurens B."/>
            <person name="Vacherie B."/>
            <person name="Wincker P."/>
            <person name="Weissenbach J."/>
            <person name="Lemaitre B."/>
            <person name="Medigue C."/>
            <person name="Boccard F."/>
        </authorList>
    </citation>
    <scope>NUCLEOTIDE SEQUENCE [LARGE SCALE GENOMIC DNA]</scope>
    <source>
        <strain>L48</strain>
    </source>
</reference>
<feature type="chain" id="PRO_1000017263" description="5-methyltetrahydropteroyltriglutamate--homocysteine methyltransferase">
    <location>
        <begin position="1"/>
        <end position="762"/>
    </location>
</feature>
<feature type="active site" description="Proton donor" evidence="1">
    <location>
        <position position="702"/>
    </location>
</feature>
<feature type="binding site" evidence="1">
    <location>
        <begin position="16"/>
        <end position="19"/>
    </location>
    <ligand>
        <name>5-methyltetrahydropteroyltri-L-glutamate</name>
        <dbReference type="ChEBI" id="CHEBI:58207"/>
    </ligand>
</feature>
<feature type="binding site" evidence="1">
    <location>
        <position position="118"/>
    </location>
    <ligand>
        <name>5-methyltetrahydropteroyltri-L-glutamate</name>
        <dbReference type="ChEBI" id="CHEBI:58207"/>
    </ligand>
</feature>
<feature type="binding site" evidence="1">
    <location>
        <begin position="439"/>
        <end position="441"/>
    </location>
    <ligand>
        <name>L-homocysteine</name>
        <dbReference type="ChEBI" id="CHEBI:58199"/>
    </ligand>
</feature>
<feature type="binding site" evidence="1">
    <location>
        <begin position="439"/>
        <end position="441"/>
    </location>
    <ligand>
        <name>L-methionine</name>
        <dbReference type="ChEBI" id="CHEBI:57844"/>
    </ligand>
</feature>
<feature type="binding site" evidence="1">
    <location>
        <position position="492"/>
    </location>
    <ligand>
        <name>L-homocysteine</name>
        <dbReference type="ChEBI" id="CHEBI:58199"/>
    </ligand>
</feature>
<feature type="binding site" evidence="1">
    <location>
        <position position="492"/>
    </location>
    <ligand>
        <name>L-methionine</name>
        <dbReference type="ChEBI" id="CHEBI:57844"/>
    </ligand>
</feature>
<feature type="binding site" evidence="1">
    <location>
        <begin position="523"/>
        <end position="524"/>
    </location>
    <ligand>
        <name>5-methyltetrahydropteroyltri-L-glutamate</name>
        <dbReference type="ChEBI" id="CHEBI:58207"/>
    </ligand>
</feature>
<feature type="binding site" evidence="1">
    <location>
        <position position="569"/>
    </location>
    <ligand>
        <name>5-methyltetrahydropteroyltri-L-glutamate</name>
        <dbReference type="ChEBI" id="CHEBI:58207"/>
    </ligand>
</feature>
<feature type="binding site" evidence="1">
    <location>
        <position position="607"/>
    </location>
    <ligand>
        <name>L-homocysteine</name>
        <dbReference type="ChEBI" id="CHEBI:58199"/>
    </ligand>
</feature>
<feature type="binding site" evidence="1">
    <location>
        <position position="607"/>
    </location>
    <ligand>
        <name>L-methionine</name>
        <dbReference type="ChEBI" id="CHEBI:57844"/>
    </ligand>
</feature>
<feature type="binding site" evidence="1">
    <location>
        <position position="613"/>
    </location>
    <ligand>
        <name>5-methyltetrahydropteroyltri-L-glutamate</name>
        <dbReference type="ChEBI" id="CHEBI:58207"/>
    </ligand>
</feature>
<feature type="binding site" evidence="1">
    <location>
        <position position="649"/>
    </location>
    <ligand>
        <name>Zn(2+)</name>
        <dbReference type="ChEBI" id="CHEBI:29105"/>
        <note>catalytic</note>
    </ligand>
</feature>
<feature type="binding site" evidence="1">
    <location>
        <position position="651"/>
    </location>
    <ligand>
        <name>Zn(2+)</name>
        <dbReference type="ChEBI" id="CHEBI:29105"/>
        <note>catalytic</note>
    </ligand>
</feature>
<feature type="binding site" evidence="1">
    <location>
        <position position="673"/>
    </location>
    <ligand>
        <name>Zn(2+)</name>
        <dbReference type="ChEBI" id="CHEBI:29105"/>
        <note>catalytic</note>
    </ligand>
</feature>
<feature type="binding site" evidence="1">
    <location>
        <position position="734"/>
    </location>
    <ligand>
        <name>Zn(2+)</name>
        <dbReference type="ChEBI" id="CHEBI:29105"/>
        <note>catalytic</note>
    </ligand>
</feature>